<dbReference type="EMBL" id="AE016825">
    <property type="protein sequence ID" value="AAQ61831.1"/>
    <property type="molecule type" value="Genomic_DNA"/>
</dbReference>
<dbReference type="RefSeq" id="WP_011137718.1">
    <property type="nucleotide sequence ID" value="NC_005085.1"/>
</dbReference>
<dbReference type="SMR" id="Q7NQG7"/>
<dbReference type="STRING" id="243365.CV_4171"/>
<dbReference type="GeneID" id="66366357"/>
<dbReference type="KEGG" id="cvi:CV_4171"/>
<dbReference type="eggNOG" id="COG0097">
    <property type="taxonomic scope" value="Bacteria"/>
</dbReference>
<dbReference type="HOGENOM" id="CLU_065464_1_2_4"/>
<dbReference type="OrthoDB" id="9805007at2"/>
<dbReference type="Proteomes" id="UP000001424">
    <property type="component" value="Chromosome"/>
</dbReference>
<dbReference type="GO" id="GO:0022625">
    <property type="term" value="C:cytosolic large ribosomal subunit"/>
    <property type="evidence" value="ECO:0007669"/>
    <property type="project" value="TreeGrafter"/>
</dbReference>
<dbReference type="GO" id="GO:0019843">
    <property type="term" value="F:rRNA binding"/>
    <property type="evidence" value="ECO:0007669"/>
    <property type="project" value="UniProtKB-UniRule"/>
</dbReference>
<dbReference type="GO" id="GO:0003735">
    <property type="term" value="F:structural constituent of ribosome"/>
    <property type="evidence" value="ECO:0007669"/>
    <property type="project" value="InterPro"/>
</dbReference>
<dbReference type="GO" id="GO:0002181">
    <property type="term" value="P:cytoplasmic translation"/>
    <property type="evidence" value="ECO:0007669"/>
    <property type="project" value="TreeGrafter"/>
</dbReference>
<dbReference type="FunFam" id="3.90.930.12:FF:000001">
    <property type="entry name" value="50S ribosomal protein L6"/>
    <property type="match status" value="1"/>
</dbReference>
<dbReference type="FunFam" id="3.90.930.12:FF:000002">
    <property type="entry name" value="50S ribosomal protein L6"/>
    <property type="match status" value="1"/>
</dbReference>
<dbReference type="Gene3D" id="3.90.930.12">
    <property type="entry name" value="Ribosomal protein L6, alpha-beta domain"/>
    <property type="match status" value="2"/>
</dbReference>
<dbReference type="HAMAP" id="MF_01365_B">
    <property type="entry name" value="Ribosomal_uL6_B"/>
    <property type="match status" value="1"/>
</dbReference>
<dbReference type="InterPro" id="IPR000702">
    <property type="entry name" value="Ribosomal_uL6-like"/>
</dbReference>
<dbReference type="InterPro" id="IPR036789">
    <property type="entry name" value="Ribosomal_uL6-like_a/b-dom_sf"/>
</dbReference>
<dbReference type="InterPro" id="IPR020040">
    <property type="entry name" value="Ribosomal_uL6_a/b-dom"/>
</dbReference>
<dbReference type="InterPro" id="IPR019906">
    <property type="entry name" value="Ribosomal_uL6_bac-type"/>
</dbReference>
<dbReference type="InterPro" id="IPR002358">
    <property type="entry name" value="Ribosomal_uL6_CS"/>
</dbReference>
<dbReference type="NCBIfam" id="TIGR03654">
    <property type="entry name" value="L6_bact"/>
    <property type="match status" value="1"/>
</dbReference>
<dbReference type="PANTHER" id="PTHR11655">
    <property type="entry name" value="60S/50S RIBOSOMAL PROTEIN L6/L9"/>
    <property type="match status" value="1"/>
</dbReference>
<dbReference type="PANTHER" id="PTHR11655:SF14">
    <property type="entry name" value="LARGE RIBOSOMAL SUBUNIT PROTEIN UL6M"/>
    <property type="match status" value="1"/>
</dbReference>
<dbReference type="Pfam" id="PF00347">
    <property type="entry name" value="Ribosomal_L6"/>
    <property type="match status" value="2"/>
</dbReference>
<dbReference type="PIRSF" id="PIRSF002162">
    <property type="entry name" value="Ribosomal_L6"/>
    <property type="match status" value="1"/>
</dbReference>
<dbReference type="PRINTS" id="PR00059">
    <property type="entry name" value="RIBOSOMALL6"/>
</dbReference>
<dbReference type="SUPFAM" id="SSF56053">
    <property type="entry name" value="Ribosomal protein L6"/>
    <property type="match status" value="2"/>
</dbReference>
<dbReference type="PROSITE" id="PS00525">
    <property type="entry name" value="RIBOSOMAL_L6_1"/>
    <property type="match status" value="1"/>
</dbReference>
<gene>
    <name evidence="1" type="primary">rplF</name>
    <name type="ordered locus">CV_4171</name>
</gene>
<evidence type="ECO:0000255" key="1">
    <source>
        <dbReference type="HAMAP-Rule" id="MF_01365"/>
    </source>
</evidence>
<evidence type="ECO:0000305" key="2"/>
<protein>
    <recommendedName>
        <fullName evidence="1">Large ribosomal subunit protein uL6</fullName>
    </recommendedName>
    <alternativeName>
        <fullName evidence="2">50S ribosomal protein L6</fullName>
    </alternativeName>
</protein>
<accession>Q7NQG7</accession>
<keyword id="KW-1185">Reference proteome</keyword>
<keyword id="KW-0687">Ribonucleoprotein</keyword>
<keyword id="KW-0689">Ribosomal protein</keyword>
<keyword id="KW-0694">RNA-binding</keyword>
<keyword id="KW-0699">rRNA-binding</keyword>
<proteinExistence type="inferred from homology"/>
<feature type="chain" id="PRO_0000260848" description="Large ribosomal subunit protein uL6">
    <location>
        <begin position="1"/>
        <end position="177"/>
    </location>
</feature>
<sequence>MSRVAKNPVAIPAGVEVKFGAADVTVKGALGSLSTALCNDVEVKLDNGQLTFAAKNDSKFARAMSGTLRALLNNMVNGVSKGFEKKLQLVGVGYRAQAQGDTLNLSLGFSHPVAHKMPAGIKVETPTQTEILVKGADKQLVGQVAAEIRAYRSPEPYKGKGVRYADEVVVLKETKKK</sequence>
<comment type="function">
    <text evidence="1">This protein binds to the 23S rRNA, and is important in its secondary structure. It is located near the subunit interface in the base of the L7/L12 stalk, and near the tRNA binding site of the peptidyltransferase center.</text>
</comment>
<comment type="subunit">
    <text evidence="1">Part of the 50S ribosomal subunit.</text>
</comment>
<comment type="similarity">
    <text evidence="1">Belongs to the universal ribosomal protein uL6 family.</text>
</comment>
<reference key="1">
    <citation type="journal article" date="2003" name="Proc. Natl. Acad. Sci. U.S.A.">
        <title>The complete genome sequence of Chromobacterium violaceum reveals remarkable and exploitable bacterial adaptability.</title>
        <authorList>
            <person name="Vasconcelos A.T.R."/>
            <person name="de Almeida D.F."/>
            <person name="Hungria M."/>
            <person name="Guimaraes C.T."/>
            <person name="Antonio R.V."/>
            <person name="Almeida F.C."/>
            <person name="de Almeida L.G.P."/>
            <person name="de Almeida R."/>
            <person name="Alves-Gomes J.A."/>
            <person name="Andrade E.M."/>
            <person name="Araripe J."/>
            <person name="de Araujo M.F.F."/>
            <person name="Astolfi-Filho S."/>
            <person name="Azevedo V."/>
            <person name="Baptista A.J."/>
            <person name="Bataus L.A.M."/>
            <person name="Batista J.S."/>
            <person name="Belo A."/>
            <person name="van den Berg C."/>
            <person name="Bogo M."/>
            <person name="Bonatto S."/>
            <person name="Bordignon J."/>
            <person name="Brigido M.M."/>
            <person name="Brito C.A."/>
            <person name="Brocchi M."/>
            <person name="Burity H.A."/>
            <person name="Camargo A.A."/>
            <person name="Cardoso D.D.P."/>
            <person name="Carneiro N.P."/>
            <person name="Carraro D.M."/>
            <person name="Carvalho C.M.B."/>
            <person name="Cascardo J.C.M."/>
            <person name="Cavada B.S."/>
            <person name="Chueire L.M.O."/>
            <person name="Creczynski-Pasa T.B."/>
            <person name="Cunha-Junior N.C."/>
            <person name="Fagundes N."/>
            <person name="Falcao C.L."/>
            <person name="Fantinatti F."/>
            <person name="Farias I.P."/>
            <person name="Felipe M.S.S."/>
            <person name="Ferrari L.P."/>
            <person name="Ferro J.A."/>
            <person name="Ferro M.I.T."/>
            <person name="Franco G.R."/>
            <person name="Freitas N.S.A."/>
            <person name="Furlan L.R."/>
            <person name="Gazzinelli R.T."/>
            <person name="Gomes E.A."/>
            <person name="Goncalves P.R."/>
            <person name="Grangeiro T.B."/>
            <person name="Grattapaglia D."/>
            <person name="Grisard E.C."/>
            <person name="Hanna E.S."/>
            <person name="Jardim S.N."/>
            <person name="Laurino J."/>
            <person name="Leoi L.C.T."/>
            <person name="Lima L.F.A."/>
            <person name="Loureiro M.F."/>
            <person name="Lyra M.C.C.P."/>
            <person name="Madeira H.M.F."/>
            <person name="Manfio G.P."/>
            <person name="Maranhao A.Q."/>
            <person name="Martins W.S."/>
            <person name="di Mauro S.M.Z."/>
            <person name="de Medeiros S.R.B."/>
            <person name="Meissner R.V."/>
            <person name="Moreira M.A.M."/>
            <person name="Nascimento F.F."/>
            <person name="Nicolas M.F."/>
            <person name="Oliveira J.G."/>
            <person name="Oliveira S.C."/>
            <person name="Paixao R.F.C."/>
            <person name="Parente J.A."/>
            <person name="Pedrosa F.O."/>
            <person name="Pena S.D.J."/>
            <person name="Pereira J.O."/>
            <person name="Pereira M."/>
            <person name="Pinto L.S.R.C."/>
            <person name="Pinto L.S."/>
            <person name="Porto J.I.R."/>
            <person name="Potrich D.P."/>
            <person name="Ramalho-Neto C.E."/>
            <person name="Reis A.M.M."/>
            <person name="Rigo L.U."/>
            <person name="Rondinelli E."/>
            <person name="Santos E.B.P."/>
            <person name="Santos F.R."/>
            <person name="Schneider M.P.C."/>
            <person name="Seuanez H.N."/>
            <person name="Silva A.M.R."/>
            <person name="da Silva A.L.C."/>
            <person name="Silva D.W."/>
            <person name="Silva R."/>
            <person name="Simoes I.C."/>
            <person name="Simon D."/>
            <person name="Soares C.M.A."/>
            <person name="Soares R.B.A."/>
            <person name="Souza E.M."/>
            <person name="Souza K.R.L."/>
            <person name="Souza R.C."/>
            <person name="Steffens M.B.R."/>
            <person name="Steindel M."/>
            <person name="Teixeira S.R."/>
            <person name="Urmenyi T."/>
            <person name="Vettore A."/>
            <person name="Wassem R."/>
            <person name="Zaha A."/>
            <person name="Simpson A.J.G."/>
        </authorList>
    </citation>
    <scope>NUCLEOTIDE SEQUENCE [LARGE SCALE GENOMIC DNA]</scope>
    <source>
        <strain>ATCC 12472 / DSM 30191 / JCM 1249 / CCUG 213 / NBRC 12614 / NCIMB 9131 / NCTC 9757 / MK</strain>
    </source>
</reference>
<name>RL6_CHRVO</name>
<organism>
    <name type="scientific">Chromobacterium violaceum (strain ATCC 12472 / DSM 30191 / JCM 1249 / CCUG 213 / NBRC 12614 / NCIMB 9131 / NCTC 9757 / MK)</name>
    <dbReference type="NCBI Taxonomy" id="243365"/>
    <lineage>
        <taxon>Bacteria</taxon>
        <taxon>Pseudomonadati</taxon>
        <taxon>Pseudomonadota</taxon>
        <taxon>Betaproteobacteria</taxon>
        <taxon>Neisseriales</taxon>
        <taxon>Chromobacteriaceae</taxon>
        <taxon>Chromobacterium</taxon>
    </lineage>
</organism>